<comment type="subunit">
    <text evidence="1">Part of the 50S ribosomal subunit.</text>
</comment>
<comment type="similarity">
    <text evidence="1">Belongs to the universal ribosomal protein uL30 family.</text>
</comment>
<proteinExistence type="inferred from homology"/>
<feature type="chain" id="PRO_1000144714" description="Large ribosomal subunit protein uL30">
    <location>
        <begin position="1"/>
        <end position="59"/>
    </location>
</feature>
<keyword id="KW-0687">Ribonucleoprotein</keyword>
<keyword id="KW-0689">Ribosomal protein</keyword>
<gene>
    <name evidence="1" type="primary">rpmD</name>
    <name type="ordered locus">SeHA_C3726</name>
</gene>
<sequence length="59" mass="6514">MAKTIKITQTRSAIGRLPKHKATLLGLGLRRIGHTVEREDTPAVRGMVNAVSFMVKVEE</sequence>
<dbReference type="EMBL" id="CP001120">
    <property type="protein sequence ID" value="ACF70379.1"/>
    <property type="molecule type" value="Genomic_DNA"/>
</dbReference>
<dbReference type="RefSeq" id="WP_001140434.1">
    <property type="nucleotide sequence ID" value="NC_011083.1"/>
</dbReference>
<dbReference type="SMR" id="B4TJZ1"/>
<dbReference type="GeneID" id="97393185"/>
<dbReference type="KEGG" id="seh:SeHA_C3726"/>
<dbReference type="HOGENOM" id="CLU_131047_1_4_6"/>
<dbReference type="Proteomes" id="UP000001866">
    <property type="component" value="Chromosome"/>
</dbReference>
<dbReference type="GO" id="GO:0022625">
    <property type="term" value="C:cytosolic large ribosomal subunit"/>
    <property type="evidence" value="ECO:0007669"/>
    <property type="project" value="TreeGrafter"/>
</dbReference>
<dbReference type="GO" id="GO:0003735">
    <property type="term" value="F:structural constituent of ribosome"/>
    <property type="evidence" value="ECO:0007669"/>
    <property type="project" value="InterPro"/>
</dbReference>
<dbReference type="GO" id="GO:0006412">
    <property type="term" value="P:translation"/>
    <property type="evidence" value="ECO:0007669"/>
    <property type="project" value="UniProtKB-UniRule"/>
</dbReference>
<dbReference type="CDD" id="cd01658">
    <property type="entry name" value="Ribosomal_L30"/>
    <property type="match status" value="1"/>
</dbReference>
<dbReference type="FunFam" id="3.30.1390.20:FF:000001">
    <property type="entry name" value="50S ribosomal protein L30"/>
    <property type="match status" value="1"/>
</dbReference>
<dbReference type="Gene3D" id="3.30.1390.20">
    <property type="entry name" value="Ribosomal protein L30, ferredoxin-like fold domain"/>
    <property type="match status" value="1"/>
</dbReference>
<dbReference type="HAMAP" id="MF_01371_B">
    <property type="entry name" value="Ribosomal_uL30_B"/>
    <property type="match status" value="1"/>
</dbReference>
<dbReference type="InterPro" id="IPR036919">
    <property type="entry name" value="Ribo_uL30_ferredoxin-like_sf"/>
</dbReference>
<dbReference type="InterPro" id="IPR005996">
    <property type="entry name" value="Ribosomal_uL30_bac-type"/>
</dbReference>
<dbReference type="InterPro" id="IPR018038">
    <property type="entry name" value="Ribosomal_uL30_CS"/>
</dbReference>
<dbReference type="InterPro" id="IPR016082">
    <property type="entry name" value="Ribosomal_uL30_ferredoxin-like"/>
</dbReference>
<dbReference type="NCBIfam" id="TIGR01308">
    <property type="entry name" value="rpmD_bact"/>
    <property type="match status" value="1"/>
</dbReference>
<dbReference type="PANTHER" id="PTHR15892:SF2">
    <property type="entry name" value="LARGE RIBOSOMAL SUBUNIT PROTEIN UL30M"/>
    <property type="match status" value="1"/>
</dbReference>
<dbReference type="PANTHER" id="PTHR15892">
    <property type="entry name" value="MITOCHONDRIAL RIBOSOMAL PROTEIN L30"/>
    <property type="match status" value="1"/>
</dbReference>
<dbReference type="Pfam" id="PF00327">
    <property type="entry name" value="Ribosomal_L30"/>
    <property type="match status" value="1"/>
</dbReference>
<dbReference type="PIRSF" id="PIRSF002211">
    <property type="entry name" value="Ribosomal_L30_bac-type"/>
    <property type="match status" value="1"/>
</dbReference>
<dbReference type="SUPFAM" id="SSF55129">
    <property type="entry name" value="Ribosomal protein L30p/L7e"/>
    <property type="match status" value="1"/>
</dbReference>
<dbReference type="PROSITE" id="PS00634">
    <property type="entry name" value="RIBOSOMAL_L30"/>
    <property type="match status" value="1"/>
</dbReference>
<protein>
    <recommendedName>
        <fullName evidence="1">Large ribosomal subunit protein uL30</fullName>
    </recommendedName>
    <alternativeName>
        <fullName evidence="2">50S ribosomal protein L30</fullName>
    </alternativeName>
</protein>
<accession>B4TJZ1</accession>
<organism>
    <name type="scientific">Salmonella heidelberg (strain SL476)</name>
    <dbReference type="NCBI Taxonomy" id="454169"/>
    <lineage>
        <taxon>Bacteria</taxon>
        <taxon>Pseudomonadati</taxon>
        <taxon>Pseudomonadota</taxon>
        <taxon>Gammaproteobacteria</taxon>
        <taxon>Enterobacterales</taxon>
        <taxon>Enterobacteriaceae</taxon>
        <taxon>Salmonella</taxon>
    </lineage>
</organism>
<name>RL30_SALHS</name>
<reference key="1">
    <citation type="journal article" date="2011" name="J. Bacteriol.">
        <title>Comparative genomics of 28 Salmonella enterica isolates: evidence for CRISPR-mediated adaptive sublineage evolution.</title>
        <authorList>
            <person name="Fricke W.F."/>
            <person name="Mammel M.K."/>
            <person name="McDermott P.F."/>
            <person name="Tartera C."/>
            <person name="White D.G."/>
            <person name="Leclerc J.E."/>
            <person name="Ravel J."/>
            <person name="Cebula T.A."/>
        </authorList>
    </citation>
    <scope>NUCLEOTIDE SEQUENCE [LARGE SCALE GENOMIC DNA]</scope>
    <source>
        <strain>SL476</strain>
    </source>
</reference>
<evidence type="ECO:0000255" key="1">
    <source>
        <dbReference type="HAMAP-Rule" id="MF_01371"/>
    </source>
</evidence>
<evidence type="ECO:0000305" key="2"/>